<reference key="1">
    <citation type="submission" date="2005-08" db="EMBL/GenBank/DDBJ databases">
        <title>Complete sequence of Chlorobium chlorochromatii CaD3.</title>
        <authorList>
            <consortium name="US DOE Joint Genome Institute"/>
            <person name="Copeland A."/>
            <person name="Lucas S."/>
            <person name="Lapidus A."/>
            <person name="Barry K."/>
            <person name="Detter J.C."/>
            <person name="Glavina T."/>
            <person name="Hammon N."/>
            <person name="Israni S."/>
            <person name="Pitluck S."/>
            <person name="Bryant D."/>
            <person name="Schmutz J."/>
            <person name="Larimer F."/>
            <person name="Land M."/>
            <person name="Kyrpides N."/>
            <person name="Ivanova N."/>
            <person name="Richardson P."/>
        </authorList>
    </citation>
    <scope>NUCLEOTIDE SEQUENCE [LARGE SCALE GENOMIC DNA]</scope>
    <source>
        <strain>CaD3</strain>
    </source>
</reference>
<keyword id="KW-0067">ATP-binding</keyword>
<keyword id="KW-0131">Cell cycle</keyword>
<keyword id="KW-0132">Cell division</keyword>
<keyword id="KW-0133">Cell shape</keyword>
<keyword id="KW-0961">Cell wall biogenesis/degradation</keyword>
<keyword id="KW-0963">Cytoplasm</keyword>
<keyword id="KW-0436">Ligase</keyword>
<keyword id="KW-0547">Nucleotide-binding</keyword>
<keyword id="KW-0573">Peptidoglycan synthesis</keyword>
<sequence length="464" mass="49969">MDVAGKKVTVLGGGKSGVAAALLLQQLGATVLLSEHGALSSEAMQRLQAAHIAYEANGHSEQIYSADFCVLSPGIPPTAPVVQQMEAHSIPLYSEIEVASCFCKARMVGITGTDGKTTTSTLIHTLCEADGKRHGYRSYSVGNSGIPFSSMVLAMQPNDVAVIELSSYQLERSISFHPQVSLITNITPDHLDRYGQNMQRYAEAKYRIFMNQQAGDTFIYNQDDSMLQAAFGASQIAVPCRSVAFGLEPLTNVQLDKRRVLVNGNMVVVRQNDGALQPIVAVDEVLNRAFRGKHNLSNVLAAVAVGEALGIGSEVMRQALTAFGGVEHRQELVATIDGVEWINDSKATNVNAMRQALEAVPAPMILIAGGRDKGNNYATVSHLIERKVCLLIATGESREKLASFFKGKVPVIAVPTIDEAVAIAHQQAKAGESVLFSPACASFDMFNNFEERGAFFKQCVRQVL</sequence>
<feature type="chain" id="PRO_0000257178" description="UDP-N-acetylmuramoylalanine--D-glutamate ligase">
    <location>
        <begin position="1"/>
        <end position="464"/>
    </location>
</feature>
<feature type="binding site" evidence="1">
    <location>
        <begin position="112"/>
        <end position="118"/>
    </location>
    <ligand>
        <name>ATP</name>
        <dbReference type="ChEBI" id="CHEBI:30616"/>
    </ligand>
</feature>
<accession>Q3ANV5</accession>
<organism>
    <name type="scientific">Chlorobium chlorochromatii (strain CaD3)</name>
    <dbReference type="NCBI Taxonomy" id="340177"/>
    <lineage>
        <taxon>Bacteria</taxon>
        <taxon>Pseudomonadati</taxon>
        <taxon>Chlorobiota</taxon>
        <taxon>Chlorobiia</taxon>
        <taxon>Chlorobiales</taxon>
        <taxon>Chlorobiaceae</taxon>
        <taxon>Chlorobium/Pelodictyon group</taxon>
        <taxon>Chlorobium</taxon>
    </lineage>
</organism>
<evidence type="ECO:0000255" key="1">
    <source>
        <dbReference type="HAMAP-Rule" id="MF_00639"/>
    </source>
</evidence>
<dbReference type="EC" id="6.3.2.9" evidence="1"/>
<dbReference type="EMBL" id="CP000108">
    <property type="protein sequence ID" value="ABB27332.1"/>
    <property type="molecule type" value="Genomic_DNA"/>
</dbReference>
<dbReference type="SMR" id="Q3ANV5"/>
<dbReference type="STRING" id="340177.Cag_0053"/>
<dbReference type="KEGG" id="cch:Cag_0053"/>
<dbReference type="eggNOG" id="COG0771">
    <property type="taxonomic scope" value="Bacteria"/>
</dbReference>
<dbReference type="HOGENOM" id="CLU_032540_0_0_10"/>
<dbReference type="OrthoDB" id="9809796at2"/>
<dbReference type="UniPathway" id="UPA00219"/>
<dbReference type="GO" id="GO:0005737">
    <property type="term" value="C:cytoplasm"/>
    <property type="evidence" value="ECO:0007669"/>
    <property type="project" value="UniProtKB-SubCell"/>
</dbReference>
<dbReference type="GO" id="GO:0005524">
    <property type="term" value="F:ATP binding"/>
    <property type="evidence" value="ECO:0007669"/>
    <property type="project" value="UniProtKB-UniRule"/>
</dbReference>
<dbReference type="GO" id="GO:0008764">
    <property type="term" value="F:UDP-N-acetylmuramoylalanine-D-glutamate ligase activity"/>
    <property type="evidence" value="ECO:0007669"/>
    <property type="project" value="UniProtKB-UniRule"/>
</dbReference>
<dbReference type="GO" id="GO:0051301">
    <property type="term" value="P:cell division"/>
    <property type="evidence" value="ECO:0007669"/>
    <property type="project" value="UniProtKB-KW"/>
</dbReference>
<dbReference type="GO" id="GO:0071555">
    <property type="term" value="P:cell wall organization"/>
    <property type="evidence" value="ECO:0007669"/>
    <property type="project" value="UniProtKB-KW"/>
</dbReference>
<dbReference type="GO" id="GO:0009252">
    <property type="term" value="P:peptidoglycan biosynthetic process"/>
    <property type="evidence" value="ECO:0007669"/>
    <property type="project" value="UniProtKB-UniRule"/>
</dbReference>
<dbReference type="GO" id="GO:0008360">
    <property type="term" value="P:regulation of cell shape"/>
    <property type="evidence" value="ECO:0007669"/>
    <property type="project" value="UniProtKB-KW"/>
</dbReference>
<dbReference type="Gene3D" id="3.90.190.20">
    <property type="entry name" value="Mur ligase, C-terminal domain"/>
    <property type="match status" value="1"/>
</dbReference>
<dbReference type="Gene3D" id="3.40.1190.10">
    <property type="entry name" value="Mur-like, catalytic domain"/>
    <property type="match status" value="1"/>
</dbReference>
<dbReference type="Gene3D" id="3.40.50.720">
    <property type="entry name" value="NAD(P)-binding Rossmann-like Domain"/>
    <property type="match status" value="1"/>
</dbReference>
<dbReference type="HAMAP" id="MF_00639">
    <property type="entry name" value="MurD"/>
    <property type="match status" value="1"/>
</dbReference>
<dbReference type="InterPro" id="IPR036565">
    <property type="entry name" value="Mur-like_cat_sf"/>
</dbReference>
<dbReference type="InterPro" id="IPR004101">
    <property type="entry name" value="Mur_ligase_C"/>
</dbReference>
<dbReference type="InterPro" id="IPR036615">
    <property type="entry name" value="Mur_ligase_C_dom_sf"/>
</dbReference>
<dbReference type="InterPro" id="IPR013221">
    <property type="entry name" value="Mur_ligase_cen"/>
</dbReference>
<dbReference type="InterPro" id="IPR005762">
    <property type="entry name" value="MurD"/>
</dbReference>
<dbReference type="NCBIfam" id="TIGR01087">
    <property type="entry name" value="murD"/>
    <property type="match status" value="1"/>
</dbReference>
<dbReference type="PANTHER" id="PTHR43692">
    <property type="entry name" value="UDP-N-ACETYLMURAMOYLALANINE--D-GLUTAMATE LIGASE"/>
    <property type="match status" value="1"/>
</dbReference>
<dbReference type="PANTHER" id="PTHR43692:SF1">
    <property type="entry name" value="UDP-N-ACETYLMURAMOYLALANINE--D-GLUTAMATE LIGASE"/>
    <property type="match status" value="1"/>
</dbReference>
<dbReference type="Pfam" id="PF02875">
    <property type="entry name" value="Mur_ligase_C"/>
    <property type="match status" value="1"/>
</dbReference>
<dbReference type="Pfam" id="PF08245">
    <property type="entry name" value="Mur_ligase_M"/>
    <property type="match status" value="1"/>
</dbReference>
<dbReference type="Pfam" id="PF21377">
    <property type="entry name" value="MurD_N"/>
    <property type="match status" value="1"/>
</dbReference>
<dbReference type="SUPFAM" id="SSF51984">
    <property type="entry name" value="MurCD N-terminal domain"/>
    <property type="match status" value="1"/>
</dbReference>
<dbReference type="SUPFAM" id="SSF53623">
    <property type="entry name" value="MurD-like peptide ligases, catalytic domain"/>
    <property type="match status" value="1"/>
</dbReference>
<dbReference type="SUPFAM" id="SSF53244">
    <property type="entry name" value="MurD-like peptide ligases, peptide-binding domain"/>
    <property type="match status" value="1"/>
</dbReference>
<proteinExistence type="inferred from homology"/>
<comment type="function">
    <text evidence="1">Cell wall formation. Catalyzes the addition of glutamate to the nucleotide precursor UDP-N-acetylmuramoyl-L-alanine (UMA).</text>
</comment>
<comment type="catalytic activity">
    <reaction evidence="1">
        <text>UDP-N-acetyl-alpha-D-muramoyl-L-alanine + D-glutamate + ATP = UDP-N-acetyl-alpha-D-muramoyl-L-alanyl-D-glutamate + ADP + phosphate + H(+)</text>
        <dbReference type="Rhea" id="RHEA:16429"/>
        <dbReference type="ChEBI" id="CHEBI:15378"/>
        <dbReference type="ChEBI" id="CHEBI:29986"/>
        <dbReference type="ChEBI" id="CHEBI:30616"/>
        <dbReference type="ChEBI" id="CHEBI:43474"/>
        <dbReference type="ChEBI" id="CHEBI:83898"/>
        <dbReference type="ChEBI" id="CHEBI:83900"/>
        <dbReference type="ChEBI" id="CHEBI:456216"/>
        <dbReference type="EC" id="6.3.2.9"/>
    </reaction>
</comment>
<comment type="pathway">
    <text evidence="1">Cell wall biogenesis; peptidoglycan biosynthesis.</text>
</comment>
<comment type="subcellular location">
    <subcellularLocation>
        <location evidence="1">Cytoplasm</location>
    </subcellularLocation>
</comment>
<comment type="similarity">
    <text evidence="1">Belongs to the MurCDEF family.</text>
</comment>
<gene>
    <name evidence="1" type="primary">murD</name>
    <name type="ordered locus">Cag_0053</name>
</gene>
<name>MURD_CHLCH</name>
<protein>
    <recommendedName>
        <fullName evidence="1">UDP-N-acetylmuramoylalanine--D-glutamate ligase</fullName>
        <ecNumber evidence="1">6.3.2.9</ecNumber>
    </recommendedName>
    <alternativeName>
        <fullName evidence="1">D-glutamic acid-adding enzyme</fullName>
    </alternativeName>
    <alternativeName>
        <fullName evidence="1">UDP-N-acetylmuramoyl-L-alanyl-D-glutamate synthetase</fullName>
    </alternativeName>
</protein>